<sequence length="581" mass="70024">MKTIKKDSEFYDSLATLKKHINKYIEEKVLKYSISSQLYKLEKPEIIELIKISNDYEKEKNAFNTSLEECYYKNTQNEAIKKWILEIVRNKNFIQISKEANLNTKKLGTTYKLKSSNFLKLIEIQNSPYYSQEKKDIYKQIILNFSSNINIDSLEQTIDILVAVRNRNKIKILNILNKNLKYRPENQKVFKSSLTNKESRLIKLKRMLILTYWPVGCLSKNIFIKILIKXYKYLEEEILALKYNEILNYLRALKTLSLNEIFYKGSSKNISFNYFFSDFTQYAPKDFQDTLKCYLYVIEKTITKKYLTWFFKDKISNNWESFIDALEYIEKHKLINIKEKIKEIITAKFQTEDFFISFDKTNFNPYESSIFKERYIKSAFLEIIMHYVKKNSQNIETYGWIAFYIYADNKDKKIFCQRMKEFFKSKTFEIQNQIFVYFLSFYPNIEYKHFKFISDILLYLDENKITIPKKIIKIQKINPNQLDYQKSYLLIKSLKTRSRILKIIIKNIRFNLIEKLEDENEKKLLPAMCYLIYCENLVELKNNRKIKSNEKNSLLEFISFFKTKLKQKINFKKELMKSKGI</sequence>
<organism>
    <name type="scientific">Borreliella burgdorferi (strain ATCC 35210 / DSM 4680 / CIP 102532 / B31)</name>
    <name type="common">Borrelia burgdorferi</name>
    <dbReference type="NCBI Taxonomy" id="224326"/>
    <lineage>
        <taxon>Bacteria</taxon>
        <taxon>Pseudomonadati</taxon>
        <taxon>Spirochaetota</taxon>
        <taxon>Spirochaetia</taxon>
        <taxon>Spirochaetales</taxon>
        <taxon>Borreliaceae</taxon>
        <taxon>Borreliella</taxon>
    </lineage>
</organism>
<protein>
    <recommendedName>
        <fullName>Uncharacterized protein BB_0208</fullName>
    </recommendedName>
</protein>
<gene>
    <name type="ordered locus">BB_0208</name>
</gene>
<proteinExistence type="predicted"/>
<feature type="chain" id="PRO_0000174386" description="Uncharacterized protein BB_0208">
    <location>
        <begin position="1"/>
        <end position="581"/>
    </location>
</feature>
<dbReference type="EMBL" id="AE000783">
    <property type="status" value="NOT_ANNOTATED_CDS"/>
    <property type="molecule type" value="Genomic_DNA"/>
</dbReference>
<dbReference type="PIR" id="H70125">
    <property type="entry name" value="H70125"/>
</dbReference>
<dbReference type="RefSeq" id="WP_023003284.1">
    <property type="nucleotide sequence ID" value="NC_001318.1"/>
</dbReference>
<dbReference type="RefSeq" id="YP_008686568.1">
    <property type="nucleotide sequence ID" value="NC_001318.1"/>
</dbReference>
<dbReference type="PATRIC" id="fig|224326.49.peg.605"/>
<dbReference type="OrthoDB" id="350986at2"/>
<dbReference type="Proteomes" id="UP000001807">
    <property type="component" value="Chromosome"/>
</dbReference>
<dbReference type="InterPro" id="IPR049714">
    <property type="entry name" value="BB0208-like"/>
</dbReference>
<dbReference type="NCBIfam" id="NF041829">
    <property type="entry name" value="Borr_BB0208"/>
    <property type="match status" value="1"/>
</dbReference>
<accession>O51226</accession>
<reference key="1">
    <citation type="journal article" date="1997" name="Nature">
        <title>Genomic sequence of a Lyme disease spirochaete, Borrelia burgdorferi.</title>
        <authorList>
            <person name="Fraser C.M."/>
            <person name="Casjens S."/>
            <person name="Huang W.M."/>
            <person name="Sutton G.G."/>
            <person name="Clayton R.A."/>
            <person name="Lathigra R."/>
            <person name="White O."/>
            <person name="Ketchum K.A."/>
            <person name="Dodson R.J."/>
            <person name="Hickey E.K."/>
            <person name="Gwinn M.L."/>
            <person name="Dougherty B.A."/>
            <person name="Tomb J.-F."/>
            <person name="Fleischmann R.D."/>
            <person name="Richardson D.L."/>
            <person name="Peterson J.D."/>
            <person name="Kerlavage A.R."/>
            <person name="Quackenbush J."/>
            <person name="Salzberg S.L."/>
            <person name="Hanson M."/>
            <person name="van Vugt R."/>
            <person name="Palmer N."/>
            <person name="Adams M.D."/>
            <person name="Gocayne J.D."/>
            <person name="Weidman J.F."/>
            <person name="Utterback T.R."/>
            <person name="Watthey L."/>
            <person name="McDonald L.A."/>
            <person name="Artiach P."/>
            <person name="Bowman C."/>
            <person name="Garland S.A."/>
            <person name="Fujii C."/>
            <person name="Cotton M.D."/>
            <person name="Horst K."/>
            <person name="Roberts K.M."/>
            <person name="Hatch B."/>
            <person name="Smith H.O."/>
            <person name="Venter J.C."/>
        </authorList>
    </citation>
    <scope>NUCLEOTIDE SEQUENCE [LARGE SCALE GENOMIC DNA]</scope>
    <source>
        <strain>ATCC 35210 / DSM 4680 / CIP 102532 / B31</strain>
    </source>
</reference>
<keyword id="KW-1185">Reference proteome</keyword>
<name>Y208_BORBU</name>